<organism>
    <name type="scientific">Solanum tuberosum</name>
    <name type="common">Potato</name>
    <dbReference type="NCBI Taxonomy" id="4113"/>
    <lineage>
        <taxon>Eukaryota</taxon>
        <taxon>Viridiplantae</taxon>
        <taxon>Streptophyta</taxon>
        <taxon>Embryophyta</taxon>
        <taxon>Tracheophyta</taxon>
        <taxon>Spermatophyta</taxon>
        <taxon>Magnoliopsida</taxon>
        <taxon>eudicotyledons</taxon>
        <taxon>Gunneridae</taxon>
        <taxon>Pentapetalae</taxon>
        <taxon>asterids</taxon>
        <taxon>lamiids</taxon>
        <taxon>Solanales</taxon>
        <taxon>Solanaceae</taxon>
        <taxon>Solanoideae</taxon>
        <taxon>Solaneae</taxon>
        <taxon>Solanum</taxon>
    </lineage>
</organism>
<feature type="chain" id="PRO_0000083318" description="Cysteine protease inhibitor 6">
    <location>
        <begin position="1" status="less than"/>
        <end position="140"/>
    </location>
</feature>
<feature type="disulfide bond" evidence="1">
    <location>
        <begin position="103"/>
        <end position="109"/>
    </location>
</feature>
<feature type="non-terminal residue">
    <location>
        <position position="1"/>
    </location>
</feature>
<dbReference type="EMBL" id="U59275">
    <property type="protein sequence ID" value="AAB63101.1"/>
    <property type="molecule type" value="mRNA"/>
</dbReference>
<dbReference type="PIR" id="T07753">
    <property type="entry name" value="T07753"/>
</dbReference>
<dbReference type="SMR" id="O24386"/>
<dbReference type="STRING" id="4113.O24386"/>
<dbReference type="MEROPS" id="I03.017"/>
<dbReference type="InParanoid" id="O24386"/>
<dbReference type="Proteomes" id="UP000011115">
    <property type="component" value="Unassembled WGS sequence"/>
</dbReference>
<dbReference type="ExpressionAtlas" id="O24386">
    <property type="expression patterns" value="baseline and differential"/>
</dbReference>
<dbReference type="GO" id="GO:0005773">
    <property type="term" value="C:vacuole"/>
    <property type="evidence" value="ECO:0007669"/>
    <property type="project" value="UniProtKB-SubCell"/>
</dbReference>
<dbReference type="GO" id="GO:0004869">
    <property type="term" value="F:cysteine-type endopeptidase inhibitor activity"/>
    <property type="evidence" value="ECO:0007669"/>
    <property type="project" value="UniProtKB-KW"/>
</dbReference>
<dbReference type="Gene3D" id="2.80.10.50">
    <property type="match status" value="1"/>
</dbReference>
<dbReference type="InterPro" id="IPR011065">
    <property type="entry name" value="Kunitz_inhibitor_STI-like_sf"/>
</dbReference>
<dbReference type="InterPro" id="IPR002160">
    <property type="entry name" value="Prot_inh_Kunz-lg"/>
</dbReference>
<dbReference type="PANTHER" id="PTHR33107:SF44">
    <property type="entry name" value="CYSTEINE PROTEASE INHIBITOR 1"/>
    <property type="match status" value="1"/>
</dbReference>
<dbReference type="PANTHER" id="PTHR33107">
    <property type="entry name" value="KUNITZ TRYPSIN INHIBITOR 2"/>
    <property type="match status" value="1"/>
</dbReference>
<dbReference type="Pfam" id="PF00197">
    <property type="entry name" value="Kunitz_legume"/>
    <property type="match status" value="1"/>
</dbReference>
<dbReference type="SMART" id="SM00452">
    <property type="entry name" value="STI"/>
    <property type="match status" value="1"/>
</dbReference>
<dbReference type="SUPFAM" id="SSF50386">
    <property type="entry name" value="STI-like"/>
    <property type="match status" value="1"/>
</dbReference>
<reference key="1">
    <citation type="journal article" date="1997" name="Plant Mol. Biol.">
        <title>Potato cysteine proteinase inhibitor gene family: molecular cloning, characterisation and immunocytochemical localisation studies.</title>
        <authorList>
            <person name="Gruden K."/>
            <person name="Strukelj B."/>
            <person name="Ravnikar M."/>
            <person name="Poljsak-Prijatelj M."/>
            <person name="Mavric I."/>
            <person name="Brzin J."/>
            <person name="Pungercar J."/>
            <person name="Kregar I."/>
        </authorList>
    </citation>
    <scope>NUCLEOTIDE SEQUENCE [MRNA]</scope>
    <source>
        <strain>cv. Ulster Sceptre</strain>
        <tissue>Tuber</tissue>
    </source>
</reference>
<comment type="function">
    <text>Inhibitor of cysteine proteases. May protect the plant by inhibiting proteases of invading organisms.</text>
</comment>
<comment type="subcellular location">
    <subcellularLocation>
        <location evidence="1">Vacuole</location>
    </subcellularLocation>
</comment>
<comment type="similarity">
    <text evidence="2">Belongs to the protease inhibitor I3 (leguminous Kunitz-type inhibitor) family.</text>
</comment>
<protein>
    <recommendedName>
        <fullName>Cysteine protease inhibitor 6</fullName>
    </recommendedName>
    <alternativeName>
        <fullName>PCPI-6</fullName>
        <shortName>Pcpi6</shortName>
    </alternativeName>
</protein>
<evidence type="ECO:0000250" key="1"/>
<evidence type="ECO:0000305" key="2"/>
<accession>O24386</accession>
<name>CPI6_SOLTU</name>
<sequence>LNSPNAVLQHMSIPQFLGKGTPVVFVRKSESDYGDVVRVMTGVYIKFFFKTSKLCVDETVWKVNDEELVVTGGNVGNENDIFKIKKTDLVIRGMKNVYKLLHCRSHLGCKNIGGNFKNGYPRLAAVDDDKDFIPFVFIKA</sequence>
<keyword id="KW-1015">Disulfide bond</keyword>
<keyword id="KW-0646">Protease inhibitor</keyword>
<keyword id="KW-1185">Reference proteome</keyword>
<keyword id="KW-0789">Thiol protease inhibitor</keyword>
<keyword id="KW-0926">Vacuole</keyword>
<proteinExistence type="evidence at transcript level"/>